<name>RIFL_AMYMS</name>
<organism>
    <name type="scientific">Amycolatopsis mediterranei (strain S699)</name>
    <name type="common">Nocardia mediterranei</name>
    <dbReference type="NCBI Taxonomy" id="713604"/>
    <lineage>
        <taxon>Bacteria</taxon>
        <taxon>Bacillati</taxon>
        <taxon>Actinomycetota</taxon>
        <taxon>Actinomycetes</taxon>
        <taxon>Pseudonocardiales</taxon>
        <taxon>Pseudonocardiaceae</taxon>
        <taxon>Amycolatopsis</taxon>
    </lineage>
</organism>
<feature type="chain" id="PRO_0000422401" description="Putative UDP-kanosamine synthase oxidoreductase subunit">
    <location>
        <begin position="1"/>
        <end position="358"/>
    </location>
</feature>
<proteinExistence type="evidence at protein level"/>
<comment type="function">
    <text evidence="1">In a complex with RifK, RifL may catalyze the oxidation of UDP-glucose to UDP-3-keto-D-glucose, which would then be used by RifK to produce UDP-kanosamine. Is not able to use dTDP-glucose as substrate.</text>
</comment>
<comment type="catalytic activity">
    <reaction>
        <text>UDP-alpha-D-glucose + NAD(+) = UDP-3-oxo-alpha-D-glucose + NADH + H(+)</text>
        <dbReference type="Rhea" id="RHEA:35755"/>
        <dbReference type="ChEBI" id="CHEBI:15378"/>
        <dbReference type="ChEBI" id="CHEBI:57540"/>
        <dbReference type="ChEBI" id="CHEBI:57945"/>
        <dbReference type="ChEBI" id="CHEBI:58885"/>
        <dbReference type="ChEBI" id="CHEBI:71965"/>
    </reaction>
</comment>
<comment type="pathway">
    <text evidence="2">Antibiotic biosynthesis; rifamycin B biosynthesis.</text>
</comment>
<comment type="subunit">
    <text evidence="2">Interacts with RifK.</text>
</comment>
<comment type="disruption phenotype">
    <text evidence="1">Cells lacking this gene are unable to produce rifamycin B, but production can be restored to wild-type levels by supplementation of the culture with 3-amino-5-hydroxybenzoate (AHBA).</text>
</comment>
<reference key="1">
    <citation type="journal article" date="1998" name="Chem. Biol.">
        <title>Biosynthesis of the ansamycin antibiotic rifamycin: deductions from the molecular analysis of the rif biosynthetic gene cluster of Amycolatopsis mediterranei S699.</title>
        <authorList>
            <person name="August P.R."/>
            <person name="Tang L."/>
            <person name="Yoon Y.J."/>
            <person name="Ning S."/>
            <person name="Mueller R."/>
            <person name="Yu T.W."/>
            <person name="Taylor M."/>
            <person name="Hoffmann D."/>
            <person name="Kim C.G."/>
            <person name="Zhang X."/>
            <person name="Hutchinson C.R."/>
            <person name="Floss H.G."/>
        </authorList>
    </citation>
    <scope>NUCLEOTIDE SEQUENCE [GENOMIC DNA]</scope>
    <source>
        <strain>S699</strain>
    </source>
</reference>
<reference key="2">
    <citation type="journal article" date="2011" name="J. Bacteriol.">
        <title>Whole genome sequence of the rifamycin B-producing strain Amycolatopsis mediterranei S699.</title>
        <authorList>
            <person name="Verma M."/>
            <person name="Kaur J."/>
            <person name="Kumar M."/>
            <person name="Kumari K."/>
            <person name="Saxena A."/>
            <person name="Anand S."/>
            <person name="Nigam A."/>
            <person name="Ravi V."/>
            <person name="Raghuvanshi S."/>
            <person name="Khurana P."/>
            <person name="Tyagi A.K."/>
            <person name="Khurana J.P."/>
            <person name="Lal R."/>
        </authorList>
    </citation>
    <scope>NUCLEOTIDE SEQUENCE [LARGE SCALE GENOMIC DNA]</scope>
    <source>
        <strain>S699</strain>
    </source>
</reference>
<reference key="3">
    <citation type="journal article" date="2012" name="J. Bacteriol.">
        <title>Complete genome sequence of Amycolatopsis mediterranei S699 based on de novo assembly via a combinatorial sequencing strategy.</title>
        <authorList>
            <person name="Tang B."/>
            <person name="Zhao W."/>
            <person name="Zheng H."/>
            <person name="Zhuo Y."/>
            <person name="Zhang L."/>
            <person name="Zhao G.P."/>
        </authorList>
    </citation>
    <scope>NUCLEOTIDE SEQUENCE [LARGE SCALE GENOMIC DNA]</scope>
    <source>
        <strain>S699</strain>
    </source>
</reference>
<reference key="4">
    <citation type="journal article" date="2001" name="J. Biol. Chem.">
        <title>Mutational analysis and reconstituted expression of the biosynthetic genes involved in the formation of 3-amino-5-hydroxybenzoic acid, the starter unit of rifamycin biosynthesis in amycolatopsis Mediterranei S699.</title>
        <authorList>
            <person name="Yu T.W."/>
            <person name="Muller R."/>
            <person name="Muller M."/>
            <person name="Zhang X."/>
            <person name="Draeger G."/>
            <person name="Kim C.G."/>
            <person name="Leistner E."/>
            <person name="Floss H.G."/>
        </authorList>
    </citation>
    <scope>DISRUPTION PHENOTYPE</scope>
    <scope>ROLE IN RIFAMYCIN BIOSYNTHESIS</scope>
    <source>
        <strain>S699</strain>
    </source>
</reference>
<reference key="5">
    <citation type="journal article" date="2011" name="J. Antibiot.">
        <title>The biosynthesis of 3-amino-5-hydroxybenzoic acid (AHBA), the precursor of mC7N units in ansamycin and mitomycin antibiotics: a review.</title>
        <authorList>
            <person name="Floss H.G."/>
            <person name="Yu T.W."/>
            <person name="Arakawa K."/>
        </authorList>
    </citation>
    <scope>PUTATIVE FUNCTION AS UDP-GLUCOSE DEHYDROGENASE</scope>
    <scope>PATHWAY</scope>
    <scope>INTERACTION WITH RIFK</scope>
    <source>
        <strain>S699</strain>
    </source>
</reference>
<accession>Q7BUE1</accession>
<accession>G0FS66</accession>
<sequence length="358" mass="37933">MSVRAAVVGLGWAGRELWLPLLREHADFEVVAAVDADPASRQAFTKATGIPTHAAVSALTAREVDLAVVAVPNYLHTEVAGALLATGISVFLEKPVCLNSAEIDVLAAAERSGGMLLAGSAARYRGDVGALRRLLPELGEIRHVALGWIRARGVPRAGGWFTQREKAGGGALYDLGWHLLDTLAFLLGPAAFTQVIGVTSDDFVNAGAWRAAWRQDQLGADAADVEDTARGFLVRDDGVSVSLRASWASHQARDVSVIHVEGSAGTADLRCTFGFSPNREPEPVLSVTREGTTTRLPVPLERIGVEYTRQVSDLAAMLADPGHRGRAVAEARPIVSMIENFYASAGSARGRGAVPAYQ</sequence>
<keyword id="KW-0045">Antibiotic biosynthesis</keyword>
<keyword id="KW-0520">NAD</keyword>
<keyword id="KW-0560">Oxidoreductase</keyword>
<gene>
    <name type="primary">rifL</name>
    <name type="ordered locus">RAM_03210</name>
    <name type="ordered locus">AMES_0626</name>
</gene>
<dbReference type="EC" id="1.1.1.-"/>
<dbReference type="EMBL" id="AF040570">
    <property type="protein sequence ID" value="AAS07754.1"/>
    <property type="molecule type" value="Genomic_DNA"/>
</dbReference>
<dbReference type="EMBL" id="CP002896">
    <property type="protein sequence ID" value="AEK39134.1"/>
    <property type="molecule type" value="Genomic_DNA"/>
</dbReference>
<dbReference type="EMBL" id="CP003729">
    <property type="protein sequence ID" value="AFO74162.1"/>
    <property type="molecule type" value="Genomic_DNA"/>
</dbReference>
<dbReference type="RefSeq" id="WP_013222558.1">
    <property type="nucleotide sequence ID" value="NC_018266.1"/>
</dbReference>
<dbReference type="SMR" id="Q7BUE1"/>
<dbReference type="STRING" id="713604.RAM_03210"/>
<dbReference type="GeneID" id="92868430"/>
<dbReference type="KEGG" id="amm:AMES_0626"/>
<dbReference type="KEGG" id="amn:RAM_03210"/>
<dbReference type="PATRIC" id="fig|713604.12.peg.667"/>
<dbReference type="HOGENOM" id="CLU_023194_1_4_11"/>
<dbReference type="BioCyc" id="MetaCyc:MONOMER-14077"/>
<dbReference type="UniPathway" id="UPA01029"/>
<dbReference type="Proteomes" id="UP000006138">
    <property type="component" value="Chromosome"/>
</dbReference>
<dbReference type="GO" id="GO:0000166">
    <property type="term" value="F:nucleotide binding"/>
    <property type="evidence" value="ECO:0007669"/>
    <property type="project" value="InterPro"/>
</dbReference>
<dbReference type="GO" id="GO:0102982">
    <property type="term" value="F:UDP-3-dehydro-alpha-D-glucose dehydrogenase activity"/>
    <property type="evidence" value="ECO:0007669"/>
    <property type="project" value="RHEA"/>
</dbReference>
<dbReference type="GO" id="GO:0017000">
    <property type="term" value="P:antibiotic biosynthetic process"/>
    <property type="evidence" value="ECO:0007669"/>
    <property type="project" value="UniProtKB-KW"/>
</dbReference>
<dbReference type="Gene3D" id="3.30.360.10">
    <property type="entry name" value="Dihydrodipicolinate Reductase, domain 2"/>
    <property type="match status" value="1"/>
</dbReference>
<dbReference type="Gene3D" id="3.40.50.720">
    <property type="entry name" value="NAD(P)-binding Rossmann-like Domain"/>
    <property type="match status" value="1"/>
</dbReference>
<dbReference type="InterPro" id="IPR000683">
    <property type="entry name" value="Gfo/Idh/MocA-like_OxRdtase_N"/>
</dbReference>
<dbReference type="InterPro" id="IPR051450">
    <property type="entry name" value="Gfo/Idh/MocA_Oxidoreductases"/>
</dbReference>
<dbReference type="InterPro" id="IPR055170">
    <property type="entry name" value="GFO_IDH_MocA-like_dom"/>
</dbReference>
<dbReference type="InterPro" id="IPR036291">
    <property type="entry name" value="NAD(P)-bd_dom_sf"/>
</dbReference>
<dbReference type="PANTHER" id="PTHR43377">
    <property type="entry name" value="BILIVERDIN REDUCTASE A"/>
    <property type="match status" value="1"/>
</dbReference>
<dbReference type="PANTHER" id="PTHR43377:SF1">
    <property type="entry name" value="BILIVERDIN REDUCTASE A"/>
    <property type="match status" value="1"/>
</dbReference>
<dbReference type="Pfam" id="PF01408">
    <property type="entry name" value="GFO_IDH_MocA"/>
    <property type="match status" value="1"/>
</dbReference>
<dbReference type="Pfam" id="PF22725">
    <property type="entry name" value="GFO_IDH_MocA_C3"/>
    <property type="match status" value="1"/>
</dbReference>
<dbReference type="SUPFAM" id="SSF55347">
    <property type="entry name" value="Glyceraldehyde-3-phosphate dehydrogenase-like, C-terminal domain"/>
    <property type="match status" value="1"/>
</dbReference>
<dbReference type="SUPFAM" id="SSF51735">
    <property type="entry name" value="NAD(P)-binding Rossmann-fold domains"/>
    <property type="match status" value="1"/>
</dbReference>
<protein>
    <recommendedName>
        <fullName>Putative UDP-kanosamine synthase oxidoreductase subunit</fullName>
        <ecNumber>1.1.1.-</ecNumber>
    </recommendedName>
    <alternativeName>
        <fullName>UDP-glucose 3-dehydrogenase</fullName>
    </alternativeName>
</protein>
<evidence type="ECO:0000269" key="1">
    <source>
    </source>
</evidence>
<evidence type="ECO:0000269" key="2">
    <source>
    </source>
</evidence>